<reference key="1">
    <citation type="journal article" date="2004" name="Nature">
        <title>Genome sequence of Silicibacter pomeroyi reveals adaptations to the marine environment.</title>
        <authorList>
            <person name="Moran M.A."/>
            <person name="Buchan A."/>
            <person name="Gonzalez J.M."/>
            <person name="Heidelberg J.F."/>
            <person name="Whitman W.B."/>
            <person name="Kiene R.P."/>
            <person name="Henriksen J.R."/>
            <person name="King G.M."/>
            <person name="Belas R."/>
            <person name="Fuqua C."/>
            <person name="Brinkac L.M."/>
            <person name="Lewis M."/>
            <person name="Johri S."/>
            <person name="Weaver B."/>
            <person name="Pai G."/>
            <person name="Eisen J.A."/>
            <person name="Rahe E."/>
            <person name="Sheldon W.M."/>
            <person name="Ye W."/>
            <person name="Miller T.R."/>
            <person name="Carlton J."/>
            <person name="Rasko D.A."/>
            <person name="Paulsen I.T."/>
            <person name="Ren Q."/>
            <person name="Daugherty S.C."/>
            <person name="DeBoy R.T."/>
            <person name="Dodson R.J."/>
            <person name="Durkin A.S."/>
            <person name="Madupu R."/>
            <person name="Nelson W.C."/>
            <person name="Sullivan S.A."/>
            <person name="Rosovitz M.J."/>
            <person name="Haft D.H."/>
            <person name="Selengut J."/>
            <person name="Ward N."/>
        </authorList>
    </citation>
    <scope>NUCLEOTIDE SEQUENCE [LARGE SCALE GENOMIC DNA]</scope>
    <source>
        <strain>ATCC 700808 / DSM 15171 / DSS-3</strain>
    </source>
</reference>
<reference key="2">
    <citation type="journal article" date="2014" name="Stand. Genomic Sci.">
        <title>An updated genome annotation for the model marine bacterium Ruegeria pomeroyi DSS-3.</title>
        <authorList>
            <person name="Rivers A.R."/>
            <person name="Smith C.B."/>
            <person name="Moran M.A."/>
        </authorList>
    </citation>
    <scope>GENOME REANNOTATION</scope>
    <source>
        <strain>ATCC 700808 / DSM 15171 / DSS-3</strain>
    </source>
</reference>
<keyword id="KW-0963">Cytoplasm</keyword>
<keyword id="KW-0489">Methyltransferase</keyword>
<keyword id="KW-1185">Reference proteome</keyword>
<keyword id="KW-0698">rRNA processing</keyword>
<keyword id="KW-0949">S-adenosyl-L-methionine</keyword>
<keyword id="KW-0808">Transferase</keyword>
<feature type="chain" id="PRO_0000198176" description="Ribosomal RNA large subunit methyltransferase H">
    <location>
        <begin position="1"/>
        <end position="156"/>
    </location>
</feature>
<feature type="binding site" evidence="1">
    <location>
        <position position="72"/>
    </location>
    <ligand>
        <name>S-adenosyl-L-methionine</name>
        <dbReference type="ChEBI" id="CHEBI:59789"/>
    </ligand>
</feature>
<feature type="binding site" evidence="1">
    <location>
        <position position="104"/>
    </location>
    <ligand>
        <name>S-adenosyl-L-methionine</name>
        <dbReference type="ChEBI" id="CHEBI:59789"/>
    </ligand>
</feature>
<feature type="binding site" evidence="1">
    <location>
        <begin position="123"/>
        <end position="128"/>
    </location>
    <ligand>
        <name>S-adenosyl-L-methionine</name>
        <dbReference type="ChEBI" id="CHEBI:59789"/>
    </ligand>
</feature>
<dbReference type="EC" id="2.1.1.177" evidence="1"/>
<dbReference type="EMBL" id="CP000031">
    <property type="protein sequence ID" value="AAV93545.1"/>
    <property type="molecule type" value="Genomic_DNA"/>
</dbReference>
<dbReference type="RefSeq" id="WP_011045988.1">
    <property type="nucleotide sequence ID" value="NC_003911.12"/>
</dbReference>
<dbReference type="SMR" id="Q5LX20"/>
<dbReference type="STRING" id="246200.SPO0220"/>
<dbReference type="PaxDb" id="246200-SPO0220"/>
<dbReference type="KEGG" id="sil:SPO0220"/>
<dbReference type="eggNOG" id="COG1576">
    <property type="taxonomic scope" value="Bacteria"/>
</dbReference>
<dbReference type="HOGENOM" id="CLU_100552_1_1_5"/>
<dbReference type="OrthoDB" id="9806643at2"/>
<dbReference type="Proteomes" id="UP000001023">
    <property type="component" value="Chromosome"/>
</dbReference>
<dbReference type="GO" id="GO:0005737">
    <property type="term" value="C:cytoplasm"/>
    <property type="evidence" value="ECO:0007669"/>
    <property type="project" value="UniProtKB-SubCell"/>
</dbReference>
<dbReference type="GO" id="GO:0070038">
    <property type="term" value="F:rRNA (pseudouridine-N3-)-methyltransferase activity"/>
    <property type="evidence" value="ECO:0007669"/>
    <property type="project" value="UniProtKB-UniRule"/>
</dbReference>
<dbReference type="CDD" id="cd18081">
    <property type="entry name" value="RlmH-like"/>
    <property type="match status" value="1"/>
</dbReference>
<dbReference type="Gene3D" id="3.40.1280.10">
    <property type="match status" value="1"/>
</dbReference>
<dbReference type="HAMAP" id="MF_00658">
    <property type="entry name" value="23SrRNA_methyltr_H"/>
    <property type="match status" value="1"/>
</dbReference>
<dbReference type="InterPro" id="IPR029028">
    <property type="entry name" value="Alpha/beta_knot_MTases"/>
</dbReference>
<dbReference type="InterPro" id="IPR003742">
    <property type="entry name" value="RlmH-like"/>
</dbReference>
<dbReference type="InterPro" id="IPR029026">
    <property type="entry name" value="tRNA_m1G_MTases_N"/>
</dbReference>
<dbReference type="NCBIfam" id="NF000988">
    <property type="entry name" value="PRK00103.2-2"/>
    <property type="match status" value="1"/>
</dbReference>
<dbReference type="NCBIfam" id="NF000989">
    <property type="entry name" value="PRK00103.2-3"/>
    <property type="match status" value="1"/>
</dbReference>
<dbReference type="PANTHER" id="PTHR33603">
    <property type="entry name" value="METHYLTRANSFERASE"/>
    <property type="match status" value="1"/>
</dbReference>
<dbReference type="PANTHER" id="PTHR33603:SF1">
    <property type="entry name" value="RIBOSOMAL RNA LARGE SUBUNIT METHYLTRANSFERASE H"/>
    <property type="match status" value="1"/>
</dbReference>
<dbReference type="Pfam" id="PF02590">
    <property type="entry name" value="SPOUT_MTase"/>
    <property type="match status" value="1"/>
</dbReference>
<dbReference type="PIRSF" id="PIRSF004505">
    <property type="entry name" value="MT_bac"/>
    <property type="match status" value="1"/>
</dbReference>
<dbReference type="SUPFAM" id="SSF75217">
    <property type="entry name" value="alpha/beta knot"/>
    <property type="match status" value="1"/>
</dbReference>
<gene>
    <name evidence="1" type="primary">rlmH</name>
    <name type="ordered locus">SPO0220</name>
</gene>
<evidence type="ECO:0000255" key="1">
    <source>
        <dbReference type="HAMAP-Rule" id="MF_00658"/>
    </source>
</evidence>
<proteinExistence type="inferred from homology"/>
<organism>
    <name type="scientific">Ruegeria pomeroyi (strain ATCC 700808 / DSM 15171 / DSS-3)</name>
    <name type="common">Silicibacter pomeroyi</name>
    <dbReference type="NCBI Taxonomy" id="246200"/>
    <lineage>
        <taxon>Bacteria</taxon>
        <taxon>Pseudomonadati</taxon>
        <taxon>Pseudomonadota</taxon>
        <taxon>Alphaproteobacteria</taxon>
        <taxon>Rhodobacterales</taxon>
        <taxon>Roseobacteraceae</taxon>
        <taxon>Ruegeria</taxon>
    </lineage>
</organism>
<name>RLMH_RUEPO</name>
<sequence length="156" mass="16864">MRVSILAVGRLRTGPEKSLIDDYLTRFDRTGRALGLGPARVVEVEDKKNAGMGAEAALLRKALPAGAVLCTLDERGKQLSSPDFADRMAGWRDTGRQDLALVIGGADGIDPSLRAEADFSISFGAMVWPHMLVRVMLAEQLYRAATILAGSPYHRV</sequence>
<protein>
    <recommendedName>
        <fullName evidence="1">Ribosomal RNA large subunit methyltransferase H</fullName>
        <ecNumber evidence="1">2.1.1.177</ecNumber>
    </recommendedName>
    <alternativeName>
        <fullName evidence="1">23S rRNA (pseudouridine1915-N3)-methyltransferase</fullName>
    </alternativeName>
    <alternativeName>
        <fullName evidence="1">23S rRNA m3Psi1915 methyltransferase</fullName>
    </alternativeName>
    <alternativeName>
        <fullName evidence="1">rRNA (pseudouridine-N3-)-methyltransferase RlmH</fullName>
    </alternativeName>
</protein>
<accession>Q5LX20</accession>
<comment type="function">
    <text evidence="1">Specifically methylates the pseudouridine at position 1915 (m3Psi1915) in 23S rRNA.</text>
</comment>
<comment type="catalytic activity">
    <reaction evidence="1">
        <text>pseudouridine(1915) in 23S rRNA + S-adenosyl-L-methionine = N(3)-methylpseudouridine(1915) in 23S rRNA + S-adenosyl-L-homocysteine + H(+)</text>
        <dbReference type="Rhea" id="RHEA:42752"/>
        <dbReference type="Rhea" id="RHEA-COMP:10221"/>
        <dbReference type="Rhea" id="RHEA-COMP:10222"/>
        <dbReference type="ChEBI" id="CHEBI:15378"/>
        <dbReference type="ChEBI" id="CHEBI:57856"/>
        <dbReference type="ChEBI" id="CHEBI:59789"/>
        <dbReference type="ChEBI" id="CHEBI:65314"/>
        <dbReference type="ChEBI" id="CHEBI:74486"/>
        <dbReference type="EC" id="2.1.1.177"/>
    </reaction>
</comment>
<comment type="subunit">
    <text evidence="1">Homodimer.</text>
</comment>
<comment type="subcellular location">
    <subcellularLocation>
        <location evidence="1">Cytoplasm</location>
    </subcellularLocation>
</comment>
<comment type="similarity">
    <text evidence="1">Belongs to the RNA methyltransferase RlmH family.</text>
</comment>